<protein>
    <recommendedName>
        <fullName>DNA polymerase III subunit alpha</fullName>
        <ecNumber>2.7.7.7</ecNumber>
    </recommendedName>
</protein>
<evidence type="ECO:0000250" key="1"/>
<evidence type="ECO:0000305" key="2"/>
<gene>
    <name type="primary">dnaE</name>
    <name type="ordered locus">ML1207</name>
    <name type="ORF">MLCB458.21</name>
</gene>
<reference key="1">
    <citation type="journal article" date="2001" name="Nature">
        <title>Massive gene decay in the leprosy bacillus.</title>
        <authorList>
            <person name="Cole S.T."/>
            <person name="Eiglmeier K."/>
            <person name="Parkhill J."/>
            <person name="James K.D."/>
            <person name="Thomson N.R."/>
            <person name="Wheeler P.R."/>
            <person name="Honore N."/>
            <person name="Garnier T."/>
            <person name="Churcher C.M."/>
            <person name="Harris D.E."/>
            <person name="Mungall K.L."/>
            <person name="Basham D."/>
            <person name="Brown D."/>
            <person name="Chillingworth T."/>
            <person name="Connor R."/>
            <person name="Davies R.M."/>
            <person name="Devlin K."/>
            <person name="Duthoy S."/>
            <person name="Feltwell T."/>
            <person name="Fraser A."/>
            <person name="Hamlin N."/>
            <person name="Holroyd S."/>
            <person name="Hornsby T."/>
            <person name="Jagels K."/>
            <person name="Lacroix C."/>
            <person name="Maclean J."/>
            <person name="Moule S."/>
            <person name="Murphy L.D."/>
            <person name="Oliver K."/>
            <person name="Quail M.A."/>
            <person name="Rajandream M.A."/>
            <person name="Rutherford K.M."/>
            <person name="Rutter S."/>
            <person name="Seeger K."/>
            <person name="Simon S."/>
            <person name="Simmonds M."/>
            <person name="Skelton J."/>
            <person name="Squares R."/>
            <person name="Squares S."/>
            <person name="Stevens K."/>
            <person name="Taylor K."/>
            <person name="Whitehead S."/>
            <person name="Woodward J.R."/>
            <person name="Barrell B.G."/>
        </authorList>
    </citation>
    <scope>NUCLEOTIDE SEQUENCE [LARGE SCALE GENOMIC DNA]</scope>
    <source>
        <strain>TN</strain>
    </source>
</reference>
<comment type="function">
    <text evidence="1">DNA polymerase III is a complex, multichain enzyme responsible for most of the replicative synthesis in bacteria. This DNA polymerase also exhibits 3' to 5' exonuclease activity. The alpha chain is the DNA polymerase (By similarity).</text>
</comment>
<comment type="catalytic activity">
    <reaction>
        <text>DNA(n) + a 2'-deoxyribonucleoside 5'-triphosphate = DNA(n+1) + diphosphate</text>
        <dbReference type="Rhea" id="RHEA:22508"/>
        <dbReference type="Rhea" id="RHEA-COMP:17339"/>
        <dbReference type="Rhea" id="RHEA-COMP:17340"/>
        <dbReference type="ChEBI" id="CHEBI:33019"/>
        <dbReference type="ChEBI" id="CHEBI:61560"/>
        <dbReference type="ChEBI" id="CHEBI:173112"/>
        <dbReference type="EC" id="2.7.7.7"/>
    </reaction>
</comment>
<comment type="subunit">
    <text evidence="1">DNA polymerase III contains a core (composed of alpha, epsilon and theta chains) that associates with a tau subunit. This core dimerizes to form the PolIII' complex. PolIII' associates with the gamma complex (composed of gamma, delta, delta', psi and chi chains) and with the beta chain to form the complete DNA polymerase III complex (By similarity).</text>
</comment>
<comment type="subcellular location">
    <subcellularLocation>
        <location evidence="1">Cytoplasm</location>
    </subcellularLocation>
</comment>
<comment type="similarity">
    <text evidence="2">Belongs to the DNA polymerase type-C family. DnaE subfamily.</text>
</comment>
<sequence>MNQSSFVHLHNHTEYSMLDGAAKITPMFAEVERLQMPAVGMTDHGNMFGASEFYNTAIKAGIKPIIGVEAYIAPGSRFDTRRITWGDPSQKADDVSAGGAYTHLTMVAENAAGLRNLFKLSSLASFEGQLSKWSRMDAELIGEYAEGIIVTTGCPSGEVQTRLRLGHDREALESAAKWREIVGPDNYFLELMDHGLSIEQRVREGLLNIGRKLNIPPLATNDCHYVTRDAVHNHEALLCVQTGKTLSDPNRFKFHGDGYYLKSAAEMRQLWDDEVPGACDSTLLIAERVQSYADVWEPRNRMPVFPVPVGHDQASWLRHEVDAGLKRRFPDGPPNGYVERAAYEIDVICDKGFPAYFLIVADLVNHARSVGIRVGPGRGSAAGSLAAYALGITDIDPIPHGLLFERFLNPERTSMPDIDIDFDDRRRGEMVRYAADKWGHDRVAQVITFGTIKTKAALKDSARIHYGQPGFAMADRITKALPPAIMAKDIPLSGITDPAHERFKEAAEVRSLIETDSDVRIIYQTARGLEGLIRNAGVHACAVILSSEPLTEAIPLWKRPQDGAIITGWDYPACEAIGLLKMDFLGLRNLTIIGDAIENIKTNRGIDLDLESVPLDDQATYELLGRGDTLGVFQLDGGPMRDLLRRMQPTGFEDIVAVLALYRPGPMGMNAHNDYADRKNNRQVIKPIHPELEEPLREILAETYGLIVYQEQIMRIAQKVAGYSLARADILRKAMGKKKREVLEKEFEGFSEGMQANGFSVHAIKALWDIILPFADYAFNKSHAAGYGLISYWTAYLKANFAGEYMAGLLTSVGDDKDKAAVYLADCRKFGITVLPPDVNESVLDFASVGADIRYGLGAVRNVGANVVGSLIKTRNAKGKFADFSDYLNKIDITSCNKKVTESLIKAGAFDSLGHSRKGLFLVHADAVDSVLGTKKAEAIGQFDLFGGTDGGTDAVFTIKVPDDEWEDKHKLALEREMLGLYVSGHPLNGVAHLLAAQVDTAIPTILDGGVSNDTQVRVGGILAAVNRRVNKNGIPWASAQLDDLTGGIEVMFFPHTYSSYGADIIDDAVVLVNAKVVVRDDRIALIANQLVVPDFSNVQEDRPLAVSLLTRQCTFDKVNALKQVLARHPGTSQVHLRLISGDRITTLELDQSLRVTSSPALMGDLKALLGPGCLGD</sequence>
<feature type="chain" id="PRO_0000103328" description="DNA polymerase III subunit alpha">
    <location>
        <begin position="1"/>
        <end position="1177"/>
    </location>
</feature>
<name>DPO3A_MYCLE</name>
<keyword id="KW-0963">Cytoplasm</keyword>
<keyword id="KW-0235">DNA replication</keyword>
<keyword id="KW-0239">DNA-directed DNA polymerase</keyword>
<keyword id="KW-0548">Nucleotidyltransferase</keyword>
<keyword id="KW-1185">Reference proteome</keyword>
<keyword id="KW-0808">Transferase</keyword>
<organism>
    <name type="scientific">Mycobacterium leprae (strain TN)</name>
    <dbReference type="NCBI Taxonomy" id="272631"/>
    <lineage>
        <taxon>Bacteria</taxon>
        <taxon>Bacillati</taxon>
        <taxon>Actinomycetota</taxon>
        <taxon>Actinomycetes</taxon>
        <taxon>Mycobacteriales</taxon>
        <taxon>Mycobacteriaceae</taxon>
        <taxon>Mycobacterium</taxon>
    </lineage>
</organism>
<accession>Q9X7F0</accession>
<dbReference type="EC" id="2.7.7.7"/>
<dbReference type="EMBL" id="AL049478">
    <property type="protein sequence ID" value="CAB39586.1"/>
    <property type="molecule type" value="Genomic_DNA"/>
</dbReference>
<dbReference type="EMBL" id="AL583921">
    <property type="protein sequence ID" value="CAC31588.1"/>
    <property type="molecule type" value="Genomic_DNA"/>
</dbReference>
<dbReference type="PIR" id="A87060">
    <property type="entry name" value="A87060"/>
</dbReference>
<dbReference type="RefSeq" id="NP_301875.1">
    <property type="nucleotide sequence ID" value="NC_002677.1"/>
</dbReference>
<dbReference type="RefSeq" id="WP_010908196.1">
    <property type="nucleotide sequence ID" value="NC_002677.1"/>
</dbReference>
<dbReference type="SMR" id="Q9X7F0"/>
<dbReference type="STRING" id="272631.gene:17575038"/>
<dbReference type="KEGG" id="mle:ML1207"/>
<dbReference type="PATRIC" id="fig|272631.5.peg.2215"/>
<dbReference type="Leproma" id="ML1207"/>
<dbReference type="eggNOG" id="COG0587">
    <property type="taxonomic scope" value="Bacteria"/>
</dbReference>
<dbReference type="HOGENOM" id="CLU_001600_0_0_11"/>
<dbReference type="OrthoDB" id="9803237at2"/>
<dbReference type="Proteomes" id="UP000000806">
    <property type="component" value="Chromosome"/>
</dbReference>
<dbReference type="GO" id="GO:0005737">
    <property type="term" value="C:cytoplasm"/>
    <property type="evidence" value="ECO:0007669"/>
    <property type="project" value="UniProtKB-SubCell"/>
</dbReference>
<dbReference type="GO" id="GO:0008408">
    <property type="term" value="F:3'-5' exonuclease activity"/>
    <property type="evidence" value="ECO:0007669"/>
    <property type="project" value="InterPro"/>
</dbReference>
<dbReference type="GO" id="GO:0003887">
    <property type="term" value="F:DNA-directed DNA polymerase activity"/>
    <property type="evidence" value="ECO:0007669"/>
    <property type="project" value="UniProtKB-KW"/>
</dbReference>
<dbReference type="GO" id="GO:0003676">
    <property type="term" value="F:nucleic acid binding"/>
    <property type="evidence" value="ECO:0007669"/>
    <property type="project" value="InterPro"/>
</dbReference>
<dbReference type="GO" id="GO:0006260">
    <property type="term" value="P:DNA replication"/>
    <property type="evidence" value="ECO:0007669"/>
    <property type="project" value="UniProtKB-KW"/>
</dbReference>
<dbReference type="CDD" id="cd04485">
    <property type="entry name" value="DnaE_OBF"/>
    <property type="match status" value="1"/>
</dbReference>
<dbReference type="CDD" id="cd12113">
    <property type="entry name" value="PHP_PolIIIA_DnaE3"/>
    <property type="match status" value="1"/>
</dbReference>
<dbReference type="FunFam" id="3.20.20.140:FF:000049">
    <property type="entry name" value="DNA polymerase III subunit alpha"/>
    <property type="match status" value="1"/>
</dbReference>
<dbReference type="Gene3D" id="1.10.150.870">
    <property type="match status" value="1"/>
</dbReference>
<dbReference type="Gene3D" id="1.10.10.1600">
    <property type="entry name" value="Bacterial DNA polymerase III alpha subunit, thumb domain"/>
    <property type="match status" value="1"/>
</dbReference>
<dbReference type="Gene3D" id="3.20.20.140">
    <property type="entry name" value="Metal-dependent hydrolases"/>
    <property type="match status" value="1"/>
</dbReference>
<dbReference type="InterPro" id="IPR011708">
    <property type="entry name" value="DNA_pol3_alpha_NTPase_dom"/>
</dbReference>
<dbReference type="InterPro" id="IPR041931">
    <property type="entry name" value="DNA_pol3_alpha_thumb_dom"/>
</dbReference>
<dbReference type="InterPro" id="IPR040982">
    <property type="entry name" value="DNA_pol3_finger"/>
</dbReference>
<dbReference type="InterPro" id="IPR004805">
    <property type="entry name" value="DnaE2/DnaE/PolC"/>
</dbReference>
<dbReference type="InterPro" id="IPR029460">
    <property type="entry name" value="DNAPol_HHH"/>
</dbReference>
<dbReference type="InterPro" id="IPR004365">
    <property type="entry name" value="NA-bd_OB_tRNA"/>
</dbReference>
<dbReference type="InterPro" id="IPR004013">
    <property type="entry name" value="PHP_dom"/>
</dbReference>
<dbReference type="InterPro" id="IPR003141">
    <property type="entry name" value="Pol/His_phosphatase_N"/>
</dbReference>
<dbReference type="InterPro" id="IPR016195">
    <property type="entry name" value="Pol/histidinol_Pase-like"/>
</dbReference>
<dbReference type="NCBIfam" id="TIGR00594">
    <property type="entry name" value="polc"/>
    <property type="match status" value="1"/>
</dbReference>
<dbReference type="NCBIfam" id="NF004226">
    <property type="entry name" value="PRK05673.1"/>
    <property type="match status" value="1"/>
</dbReference>
<dbReference type="PANTHER" id="PTHR32294">
    <property type="entry name" value="DNA POLYMERASE III SUBUNIT ALPHA"/>
    <property type="match status" value="1"/>
</dbReference>
<dbReference type="PANTHER" id="PTHR32294:SF0">
    <property type="entry name" value="DNA POLYMERASE III SUBUNIT ALPHA"/>
    <property type="match status" value="1"/>
</dbReference>
<dbReference type="Pfam" id="PF07733">
    <property type="entry name" value="DNA_pol3_alpha"/>
    <property type="match status" value="1"/>
</dbReference>
<dbReference type="Pfam" id="PF17657">
    <property type="entry name" value="DNA_pol3_finger"/>
    <property type="match status" value="1"/>
</dbReference>
<dbReference type="Pfam" id="PF14579">
    <property type="entry name" value="HHH_6"/>
    <property type="match status" value="1"/>
</dbReference>
<dbReference type="Pfam" id="PF02811">
    <property type="entry name" value="PHP"/>
    <property type="match status" value="1"/>
</dbReference>
<dbReference type="Pfam" id="PF01336">
    <property type="entry name" value="tRNA_anti-codon"/>
    <property type="match status" value="1"/>
</dbReference>
<dbReference type="SMART" id="SM00481">
    <property type="entry name" value="POLIIIAc"/>
    <property type="match status" value="1"/>
</dbReference>
<dbReference type="SUPFAM" id="SSF89550">
    <property type="entry name" value="PHP domain-like"/>
    <property type="match status" value="1"/>
</dbReference>
<proteinExistence type="inferred from homology"/>